<reference key="1">
    <citation type="submission" date="2002-09" db="EMBL/GenBank/DDBJ databases">
        <title>TGF-beta induced apoptosis protein 3 (TAIP-3).</title>
        <authorList>
            <person name="Akiyama N."/>
            <person name="Saitoh S."/>
            <person name="Yamada H."/>
            <person name="Kondoh S.K."/>
        </authorList>
    </citation>
    <scope>NUCLEOTIDE SEQUENCE [MRNA]</scope>
    <source>
        <strain>BALB/cJ</strain>
        <tissue>Lung</tissue>
    </source>
</reference>
<reference key="2">
    <citation type="journal article" date="2005" name="Science">
        <title>The transcriptional landscape of the mammalian genome.</title>
        <authorList>
            <person name="Carninci P."/>
            <person name="Kasukawa T."/>
            <person name="Katayama S."/>
            <person name="Gough J."/>
            <person name="Frith M.C."/>
            <person name="Maeda N."/>
            <person name="Oyama R."/>
            <person name="Ravasi T."/>
            <person name="Lenhard B."/>
            <person name="Wells C."/>
            <person name="Kodzius R."/>
            <person name="Shimokawa K."/>
            <person name="Bajic V.B."/>
            <person name="Brenner S.E."/>
            <person name="Batalov S."/>
            <person name="Forrest A.R."/>
            <person name="Zavolan M."/>
            <person name="Davis M.J."/>
            <person name="Wilming L.G."/>
            <person name="Aidinis V."/>
            <person name="Allen J.E."/>
            <person name="Ambesi-Impiombato A."/>
            <person name="Apweiler R."/>
            <person name="Aturaliya R.N."/>
            <person name="Bailey T.L."/>
            <person name="Bansal M."/>
            <person name="Baxter L."/>
            <person name="Beisel K.W."/>
            <person name="Bersano T."/>
            <person name="Bono H."/>
            <person name="Chalk A.M."/>
            <person name="Chiu K.P."/>
            <person name="Choudhary V."/>
            <person name="Christoffels A."/>
            <person name="Clutterbuck D.R."/>
            <person name="Crowe M.L."/>
            <person name="Dalla E."/>
            <person name="Dalrymple B.P."/>
            <person name="de Bono B."/>
            <person name="Della Gatta G."/>
            <person name="di Bernardo D."/>
            <person name="Down T."/>
            <person name="Engstrom P."/>
            <person name="Fagiolini M."/>
            <person name="Faulkner G."/>
            <person name="Fletcher C.F."/>
            <person name="Fukushima T."/>
            <person name="Furuno M."/>
            <person name="Futaki S."/>
            <person name="Gariboldi M."/>
            <person name="Georgii-Hemming P."/>
            <person name="Gingeras T.R."/>
            <person name="Gojobori T."/>
            <person name="Green R.E."/>
            <person name="Gustincich S."/>
            <person name="Harbers M."/>
            <person name="Hayashi Y."/>
            <person name="Hensch T.K."/>
            <person name="Hirokawa N."/>
            <person name="Hill D."/>
            <person name="Huminiecki L."/>
            <person name="Iacono M."/>
            <person name="Ikeo K."/>
            <person name="Iwama A."/>
            <person name="Ishikawa T."/>
            <person name="Jakt M."/>
            <person name="Kanapin A."/>
            <person name="Katoh M."/>
            <person name="Kawasawa Y."/>
            <person name="Kelso J."/>
            <person name="Kitamura H."/>
            <person name="Kitano H."/>
            <person name="Kollias G."/>
            <person name="Krishnan S.P."/>
            <person name="Kruger A."/>
            <person name="Kummerfeld S.K."/>
            <person name="Kurochkin I.V."/>
            <person name="Lareau L.F."/>
            <person name="Lazarevic D."/>
            <person name="Lipovich L."/>
            <person name="Liu J."/>
            <person name="Liuni S."/>
            <person name="McWilliam S."/>
            <person name="Madan Babu M."/>
            <person name="Madera M."/>
            <person name="Marchionni L."/>
            <person name="Matsuda H."/>
            <person name="Matsuzawa S."/>
            <person name="Miki H."/>
            <person name="Mignone F."/>
            <person name="Miyake S."/>
            <person name="Morris K."/>
            <person name="Mottagui-Tabar S."/>
            <person name="Mulder N."/>
            <person name="Nakano N."/>
            <person name="Nakauchi H."/>
            <person name="Ng P."/>
            <person name="Nilsson R."/>
            <person name="Nishiguchi S."/>
            <person name="Nishikawa S."/>
            <person name="Nori F."/>
            <person name="Ohara O."/>
            <person name="Okazaki Y."/>
            <person name="Orlando V."/>
            <person name="Pang K.C."/>
            <person name="Pavan W.J."/>
            <person name="Pavesi G."/>
            <person name="Pesole G."/>
            <person name="Petrovsky N."/>
            <person name="Piazza S."/>
            <person name="Reed J."/>
            <person name="Reid J.F."/>
            <person name="Ring B.Z."/>
            <person name="Ringwald M."/>
            <person name="Rost B."/>
            <person name="Ruan Y."/>
            <person name="Salzberg S.L."/>
            <person name="Sandelin A."/>
            <person name="Schneider C."/>
            <person name="Schoenbach C."/>
            <person name="Sekiguchi K."/>
            <person name="Semple C.A."/>
            <person name="Seno S."/>
            <person name="Sessa L."/>
            <person name="Sheng Y."/>
            <person name="Shibata Y."/>
            <person name="Shimada H."/>
            <person name="Shimada K."/>
            <person name="Silva D."/>
            <person name="Sinclair B."/>
            <person name="Sperling S."/>
            <person name="Stupka E."/>
            <person name="Sugiura K."/>
            <person name="Sultana R."/>
            <person name="Takenaka Y."/>
            <person name="Taki K."/>
            <person name="Tammoja K."/>
            <person name="Tan S.L."/>
            <person name="Tang S."/>
            <person name="Taylor M.S."/>
            <person name="Tegner J."/>
            <person name="Teichmann S.A."/>
            <person name="Ueda H.R."/>
            <person name="van Nimwegen E."/>
            <person name="Verardo R."/>
            <person name="Wei C.L."/>
            <person name="Yagi K."/>
            <person name="Yamanishi H."/>
            <person name="Zabarovsky E."/>
            <person name="Zhu S."/>
            <person name="Zimmer A."/>
            <person name="Hide W."/>
            <person name="Bult C."/>
            <person name="Grimmond S.M."/>
            <person name="Teasdale R.D."/>
            <person name="Liu E.T."/>
            <person name="Brusic V."/>
            <person name="Quackenbush J."/>
            <person name="Wahlestedt C."/>
            <person name="Mattick J.S."/>
            <person name="Hume D.A."/>
            <person name="Kai C."/>
            <person name="Sasaki D."/>
            <person name="Tomaru Y."/>
            <person name="Fukuda S."/>
            <person name="Kanamori-Katayama M."/>
            <person name="Suzuki M."/>
            <person name="Aoki J."/>
            <person name="Arakawa T."/>
            <person name="Iida J."/>
            <person name="Imamura K."/>
            <person name="Itoh M."/>
            <person name="Kato T."/>
            <person name="Kawaji H."/>
            <person name="Kawagashira N."/>
            <person name="Kawashima T."/>
            <person name="Kojima M."/>
            <person name="Kondo S."/>
            <person name="Konno H."/>
            <person name="Nakano K."/>
            <person name="Ninomiya N."/>
            <person name="Nishio T."/>
            <person name="Okada M."/>
            <person name="Plessy C."/>
            <person name="Shibata K."/>
            <person name="Shiraki T."/>
            <person name="Suzuki S."/>
            <person name="Tagami M."/>
            <person name="Waki K."/>
            <person name="Watahiki A."/>
            <person name="Okamura-Oho Y."/>
            <person name="Suzuki H."/>
            <person name="Kawai J."/>
            <person name="Hayashizaki Y."/>
        </authorList>
    </citation>
    <scope>NUCLEOTIDE SEQUENCE [LARGE SCALE MRNA]</scope>
    <source>
        <strain>C57BL/6J</strain>
        <tissue>Corpora quadrigemina</tissue>
        <tissue>Testis</tissue>
    </source>
</reference>
<reference key="3">
    <citation type="journal article" date="2004" name="Genome Res.">
        <title>The status, quality, and expansion of the NIH full-length cDNA project: the Mammalian Gene Collection (MGC).</title>
        <authorList>
            <consortium name="The MGC Project Team"/>
        </authorList>
    </citation>
    <scope>NUCLEOTIDE SEQUENCE [LARGE SCALE MRNA]</scope>
    <source>
        <strain>FVB/N-3</strain>
        <tissue>Mammary gland</tissue>
        <tissue>Trophoblast</tissue>
    </source>
</reference>
<reference key="4">
    <citation type="journal article" date="2007" name="PLoS ONE">
        <title>Characterization of a family of novel cysteine- serine-rich nuclear proteins (CSRNP).</title>
        <authorList>
            <person name="Gingras S."/>
            <person name="Pelletier S."/>
            <person name="Boyd K."/>
            <person name="Ihle J.N."/>
        </authorList>
    </citation>
    <scope>FUNCTION</scope>
    <scope>SUBCELLULAR LOCATION</scope>
    <scope>TISSUE SPECIFICITY</scope>
    <scope>INDUCTION</scope>
    <scope>DISRUPTION PHENOTYPE</scope>
</reference>
<protein>
    <recommendedName>
        <fullName>Cysteine/serine-rich nuclear protein 1</fullName>
        <shortName>CSRNP-1</shortName>
    </recommendedName>
    <alternativeName>
        <fullName>Axin-1 up-regulated gene 1 protein</fullName>
    </alternativeName>
    <alternativeName>
        <fullName>TGF-beta-induced apoptosis protein 3</fullName>
        <shortName>TAIP-3</shortName>
    </alternativeName>
</protein>
<accession>P59054</accession>
<accession>Q3USP7</accession>
<comment type="function">
    <text evidence="2">Binds to the consensus sequence 5'-AGAGTG-3' and has transcriptional activator activity. May have a tumor-suppressor function. May play a role in apoptosis.</text>
</comment>
<comment type="subcellular location">
    <subcellularLocation>
        <location evidence="2">Nucleus</location>
    </subcellularLocation>
</comment>
<comment type="tissue specificity">
    <text evidence="2">Widely expressed with highest levels in thymus and lung. Low levels detected in naive T-cells.</text>
</comment>
<comment type="induction">
    <text evidence="2">By interleukin-2.</text>
</comment>
<comment type="disruption phenotype">
    <text evidence="2">Mice display no obvious defects in development, hematopoiesis or T-cell function. Deletion of Csrnp1, Csrnp2 and Csrnp3 together causes partial neonatal lethality, suggesting that they have redundant functions.</text>
</comment>
<comment type="similarity">
    <text evidence="3">Belongs to the AXUD1 family.</text>
</comment>
<keyword id="KW-0010">Activator</keyword>
<keyword id="KW-0053">Apoptosis</keyword>
<keyword id="KW-0238">DNA-binding</keyword>
<keyword id="KW-0539">Nucleus</keyword>
<keyword id="KW-1185">Reference proteome</keyword>
<keyword id="KW-0804">Transcription</keyword>
<keyword id="KW-0805">Transcription regulation</keyword>
<dbReference type="EMBL" id="AB091687">
    <property type="protein sequence ID" value="BAC16314.1"/>
    <property type="molecule type" value="mRNA"/>
</dbReference>
<dbReference type="EMBL" id="AK029893">
    <property type="protein sequence ID" value="BAC26661.1"/>
    <property type="molecule type" value="mRNA"/>
</dbReference>
<dbReference type="EMBL" id="AK140213">
    <property type="protein sequence ID" value="BAE24284.1"/>
    <property type="molecule type" value="mRNA"/>
</dbReference>
<dbReference type="EMBL" id="BC029720">
    <property type="protein sequence ID" value="AAH29720.1"/>
    <property type="molecule type" value="mRNA"/>
</dbReference>
<dbReference type="EMBL" id="BC050066">
    <property type="protein sequence ID" value="AAH50066.1"/>
    <property type="molecule type" value="mRNA"/>
</dbReference>
<dbReference type="CCDS" id="CCDS23620.1"/>
<dbReference type="RefSeq" id="NP_001344489.1">
    <property type="nucleotide sequence ID" value="NM_001357560.1"/>
</dbReference>
<dbReference type="RefSeq" id="NP_001344490.1">
    <property type="nucleotide sequence ID" value="NM_001357561.1"/>
</dbReference>
<dbReference type="RefSeq" id="NP_001344491.1">
    <property type="nucleotide sequence ID" value="NM_001357562.1"/>
</dbReference>
<dbReference type="RefSeq" id="NP_695019.1">
    <property type="nucleotide sequence ID" value="NM_153287.4"/>
</dbReference>
<dbReference type="RefSeq" id="XP_006512100.1">
    <property type="nucleotide sequence ID" value="XM_006512037.3"/>
</dbReference>
<dbReference type="RefSeq" id="XP_006512101.1">
    <property type="nucleotide sequence ID" value="XM_006512038.2"/>
</dbReference>
<dbReference type="RefSeq" id="XP_006512103.1">
    <property type="nucleotide sequence ID" value="XM_006512040.4"/>
</dbReference>
<dbReference type="RefSeq" id="XP_006512104.1">
    <property type="nucleotide sequence ID" value="XM_006512041.3"/>
</dbReference>
<dbReference type="RefSeq" id="XP_011241256.1">
    <property type="nucleotide sequence ID" value="XM_011242954.2"/>
</dbReference>
<dbReference type="BioGRID" id="229623">
    <property type="interactions" value="1"/>
</dbReference>
<dbReference type="FunCoup" id="P59054">
    <property type="interactions" value="1006"/>
</dbReference>
<dbReference type="STRING" id="10090.ENSMUSP00000149214"/>
<dbReference type="iPTMnet" id="P59054"/>
<dbReference type="PhosphoSitePlus" id="P59054"/>
<dbReference type="PaxDb" id="10090-ENSMUSP00000035101"/>
<dbReference type="ProteomicsDB" id="285378"/>
<dbReference type="Antibodypedia" id="12159">
    <property type="antibodies" value="150 antibodies from 29 providers"/>
</dbReference>
<dbReference type="Ensembl" id="ENSMUST00000035101.9">
    <property type="protein sequence ID" value="ENSMUSP00000035101.8"/>
    <property type="gene ID" value="ENSMUSG00000032515.9"/>
</dbReference>
<dbReference type="Ensembl" id="ENSMUST00000214058.2">
    <property type="protein sequence ID" value="ENSMUSP00000150628.2"/>
    <property type="gene ID" value="ENSMUSG00000032515.9"/>
</dbReference>
<dbReference type="Ensembl" id="ENSMUST00000215916.2">
    <property type="protein sequence ID" value="ENSMUSP00000149214.2"/>
    <property type="gene ID" value="ENSMUSG00000032515.9"/>
</dbReference>
<dbReference type="GeneID" id="215418"/>
<dbReference type="KEGG" id="mmu:215418"/>
<dbReference type="UCSC" id="uc009sbu.1">
    <property type="organism name" value="mouse"/>
</dbReference>
<dbReference type="AGR" id="MGI:2387989"/>
<dbReference type="CTD" id="64651"/>
<dbReference type="MGI" id="MGI:2387989">
    <property type="gene designation" value="Csrnp1"/>
</dbReference>
<dbReference type="VEuPathDB" id="HostDB:ENSMUSG00000032515"/>
<dbReference type="eggNOG" id="KOG3813">
    <property type="taxonomic scope" value="Eukaryota"/>
</dbReference>
<dbReference type="GeneTree" id="ENSGT00950000183072"/>
<dbReference type="HOGENOM" id="CLU_034103_2_2_1"/>
<dbReference type="InParanoid" id="P59054"/>
<dbReference type="OMA" id="CGCDCRE"/>
<dbReference type="OrthoDB" id="5946974at2759"/>
<dbReference type="PhylomeDB" id="P59054"/>
<dbReference type="TreeFam" id="TF323969"/>
<dbReference type="BioGRID-ORCS" id="215418">
    <property type="hits" value="2 hits in 78 CRISPR screens"/>
</dbReference>
<dbReference type="ChiTaRS" id="Csrnp1">
    <property type="organism name" value="mouse"/>
</dbReference>
<dbReference type="PRO" id="PR:P59054"/>
<dbReference type="Proteomes" id="UP000000589">
    <property type="component" value="Chromosome 9"/>
</dbReference>
<dbReference type="RNAct" id="P59054">
    <property type="molecule type" value="protein"/>
</dbReference>
<dbReference type="Bgee" id="ENSMUSG00000032515">
    <property type="expression patterns" value="Expressed in granulocyte and 207 other cell types or tissues"/>
</dbReference>
<dbReference type="ExpressionAtlas" id="P59054">
    <property type="expression patterns" value="baseline and differential"/>
</dbReference>
<dbReference type="GO" id="GO:0005634">
    <property type="term" value="C:nucleus"/>
    <property type="evidence" value="ECO:0000314"/>
    <property type="project" value="UniProtKB"/>
</dbReference>
<dbReference type="GO" id="GO:0001228">
    <property type="term" value="F:DNA-binding transcription activator activity, RNA polymerase II-specific"/>
    <property type="evidence" value="ECO:0000314"/>
    <property type="project" value="NTNU_SB"/>
</dbReference>
<dbReference type="GO" id="GO:0003700">
    <property type="term" value="F:DNA-binding transcription factor activity"/>
    <property type="evidence" value="ECO:0000314"/>
    <property type="project" value="UniProtKB"/>
</dbReference>
<dbReference type="GO" id="GO:0043565">
    <property type="term" value="F:sequence-specific DNA binding"/>
    <property type="evidence" value="ECO:0000314"/>
    <property type="project" value="NTNU_SB"/>
</dbReference>
<dbReference type="GO" id="GO:0006915">
    <property type="term" value="P:apoptotic process"/>
    <property type="evidence" value="ECO:0007669"/>
    <property type="project" value="UniProtKB-KW"/>
</dbReference>
<dbReference type="GO" id="GO:0060325">
    <property type="term" value="P:face morphogenesis"/>
    <property type="evidence" value="ECO:0000315"/>
    <property type="project" value="MGI"/>
</dbReference>
<dbReference type="GO" id="GO:0048008">
    <property type="term" value="P:platelet-derived growth factor receptor signaling pathway"/>
    <property type="evidence" value="ECO:0000315"/>
    <property type="project" value="MGI"/>
</dbReference>
<dbReference type="GO" id="GO:0045944">
    <property type="term" value="P:positive regulation of transcription by RNA polymerase II"/>
    <property type="evidence" value="ECO:0000314"/>
    <property type="project" value="UniProtKB"/>
</dbReference>
<dbReference type="GO" id="GO:0009791">
    <property type="term" value="P:post-embryonic development"/>
    <property type="evidence" value="ECO:0000315"/>
    <property type="project" value="MGI"/>
</dbReference>
<dbReference type="GO" id="GO:0006355">
    <property type="term" value="P:regulation of DNA-templated transcription"/>
    <property type="evidence" value="ECO:0000315"/>
    <property type="project" value="MGI"/>
</dbReference>
<dbReference type="GO" id="GO:0060021">
    <property type="term" value="P:roof of mouth development"/>
    <property type="evidence" value="ECO:0000315"/>
    <property type="project" value="MGI"/>
</dbReference>
<dbReference type="GO" id="GO:0048705">
    <property type="term" value="P:skeletal system morphogenesis"/>
    <property type="evidence" value="ECO:0000315"/>
    <property type="project" value="MGI"/>
</dbReference>
<dbReference type="InterPro" id="IPR031972">
    <property type="entry name" value="CSRNP_N"/>
</dbReference>
<dbReference type="InterPro" id="IPR023260">
    <property type="entry name" value="Cys/Ser-rich_nuc_prot"/>
</dbReference>
<dbReference type="PANTHER" id="PTHR13580:SF10">
    <property type="entry name" value="CYSTEINE_SERINE-RICH NUCLEAR PROTEIN 1"/>
    <property type="match status" value="1"/>
</dbReference>
<dbReference type="PANTHER" id="PTHR13580">
    <property type="entry name" value="TGF-BETA INDUCED APOPTOSIS PROTEIN"/>
    <property type="match status" value="1"/>
</dbReference>
<dbReference type="Pfam" id="PF16019">
    <property type="entry name" value="CSRNP_N"/>
    <property type="match status" value="1"/>
</dbReference>
<dbReference type="PRINTS" id="PR02031">
    <property type="entry name" value="CYSSERRICHNP"/>
</dbReference>
<gene>
    <name type="primary">Csrnp1</name>
    <name type="synonym">Axud1</name>
    <name type="synonym">Taip3</name>
</gene>
<organism>
    <name type="scientific">Mus musculus</name>
    <name type="common">Mouse</name>
    <dbReference type="NCBI Taxonomy" id="10090"/>
    <lineage>
        <taxon>Eukaryota</taxon>
        <taxon>Metazoa</taxon>
        <taxon>Chordata</taxon>
        <taxon>Craniata</taxon>
        <taxon>Vertebrata</taxon>
        <taxon>Euteleostomi</taxon>
        <taxon>Mammalia</taxon>
        <taxon>Eutheria</taxon>
        <taxon>Euarchontoglires</taxon>
        <taxon>Glires</taxon>
        <taxon>Rodentia</taxon>
        <taxon>Myomorpha</taxon>
        <taxon>Muroidea</taxon>
        <taxon>Muridae</taxon>
        <taxon>Murinae</taxon>
        <taxon>Mus</taxon>
        <taxon>Mus</taxon>
    </lineage>
</organism>
<feature type="chain" id="PRO_0000114787" description="Cysteine/serine-rich nuclear protein 1">
    <location>
        <begin position="1"/>
        <end position="583"/>
    </location>
</feature>
<feature type="region of interest" description="Disordered" evidence="1">
    <location>
        <begin position="1"/>
        <end position="79"/>
    </location>
</feature>
<feature type="region of interest" description="Disordered" evidence="1">
    <location>
        <begin position="306"/>
        <end position="381"/>
    </location>
</feature>
<feature type="compositionally biased region" description="Low complexity" evidence="1">
    <location>
        <begin position="18"/>
        <end position="41"/>
    </location>
</feature>
<feature type="compositionally biased region" description="Polar residues" evidence="1">
    <location>
        <begin position="54"/>
        <end position="69"/>
    </location>
</feature>
<feature type="compositionally biased region" description="Low complexity" evidence="1">
    <location>
        <begin position="335"/>
        <end position="361"/>
    </location>
</feature>
<feature type="compositionally biased region" description="Pro residues" evidence="1">
    <location>
        <begin position="364"/>
        <end position="373"/>
    </location>
</feature>
<feature type="sequence conflict" description="In Ref. 2; BAE24284." evidence="3" ref="2">
    <original>D</original>
    <variation>S</variation>
    <location>
        <position position="60"/>
    </location>
</feature>
<feature type="sequence conflict" description="In Ref. 2; BAE24284." evidence="3" ref="2">
    <original>P</original>
    <variation>A</variation>
    <location>
        <position position="81"/>
    </location>
</feature>
<name>CSRN1_MOUSE</name>
<sequence length="583" mass="62525">MTGLLKRKFDQLEEDDSSSSSSSSFSSRLSLSSFPASSASPAWNSDEEGPGGQAPQSDQDSCGLQSFTPPSILKRAPRERPGHVAFNGITVYYFPRCQGFTSVPSRGGCTLGMASRHSTCRLFSLAEFTQEQVRARREKLRRRLKEEKLEMLRWKFSVAGVPESGAGVPLTADAIDDASVEEDLAVAVANGRLEEANFLQPHPPRQRRALLRASGVRRIDREEKRELQVLRQSREDCGCHCDGVCDPETCSCSLAGIKCQMDHTSFPCGCCREGCENPNGRVEFNQTRVQTHFIHTLTRLQMEQGAESLGDLESPVEDTPVEQAALSPFPPSKPPVSSELGDSSCSSDMTDSSTTLSSGSSEPPNHPAHPSLPGPSFRSGVDEDSLEQILNFSDSDLGIEEEEEEGGGVGNLDNLSCFHLADIFGTGDPGSLASWTHSQSGSSLASGILDENANLDASCFLNSGLGGLREGSLPGSSGSPEGDAVQSSSWDLSLSSCDSFELLQALPDYSLGPHYTSRRVSGSPDSLETFHPLPSFSPPRDASTCFLESLVGLSEPVTEVLAPLLESQFEDAALAPLLEPVPV</sequence>
<evidence type="ECO:0000256" key="1">
    <source>
        <dbReference type="SAM" id="MobiDB-lite"/>
    </source>
</evidence>
<evidence type="ECO:0000269" key="2">
    <source>
    </source>
</evidence>
<evidence type="ECO:0000305" key="3"/>
<proteinExistence type="evidence at transcript level"/>